<proteinExistence type="inferred from homology"/>
<keyword id="KW-0325">Glycoprotein</keyword>
<keyword id="KW-0326">Glycosidase</keyword>
<keyword id="KW-0378">Hydrolase</keyword>
<keyword id="KW-0458">Lysosome</keyword>
<keyword id="KW-1185">Reference proteome</keyword>
<keyword id="KW-0732">Signal</keyword>
<accession>Q7KWW8</accession>
<accession>Q550Q6</accession>
<gene>
    <name type="primary">ctbs1</name>
    <name type="ORF">DDB_G0276795</name>
</gene>
<comment type="function">
    <text evidence="1">Involved in the degradation of asparagine-linked glycoproteins. May hydrolyze of N-acetyl-beta-D-glucosamine (1-4)N-acetylglucosamine chitobiose core from the reducing end of the bond.</text>
</comment>
<comment type="subcellular location">
    <subcellularLocation>
        <location evidence="1">Lysosome</location>
    </subcellularLocation>
</comment>
<comment type="similarity">
    <text evidence="4">Belongs to the glycosyl hydrolase 18 family.</text>
</comment>
<feature type="signal peptide" evidence="2">
    <location>
        <begin position="1"/>
        <end position="20"/>
    </location>
</feature>
<feature type="chain" id="PRO_0000328002" description="Probable di-N-acetylchitobiase 1">
    <location>
        <begin position="21"/>
        <end position="373"/>
    </location>
</feature>
<feature type="domain" description="GH18" evidence="3">
    <location>
        <begin position="21"/>
        <end position="369"/>
    </location>
</feature>
<feature type="active site" description="Proton donor" evidence="3">
    <location>
        <position position="127"/>
    </location>
</feature>
<feature type="binding site" evidence="3">
    <location>
        <begin position="53"/>
        <end position="54"/>
    </location>
    <ligand>
        <name>chitin</name>
        <dbReference type="ChEBI" id="CHEBI:17029"/>
    </ligand>
</feature>
<feature type="binding site" evidence="3">
    <location>
        <begin position="82"/>
        <end position="85"/>
    </location>
    <ligand>
        <name>chitin</name>
        <dbReference type="ChEBI" id="CHEBI:17029"/>
    </ligand>
</feature>
<feature type="binding site" evidence="3">
    <location>
        <position position="128"/>
    </location>
    <ligand>
        <name>chitin</name>
        <dbReference type="ChEBI" id="CHEBI:17029"/>
    </ligand>
</feature>
<feature type="binding site" evidence="3">
    <location>
        <begin position="191"/>
        <end position="194"/>
    </location>
    <ligand>
        <name>chitin</name>
        <dbReference type="ChEBI" id="CHEBI:17029"/>
    </ligand>
</feature>
<feature type="binding site" evidence="3">
    <location>
        <position position="347"/>
    </location>
    <ligand>
        <name>chitin</name>
        <dbReference type="ChEBI" id="CHEBI:17029"/>
    </ligand>
</feature>
<feature type="glycosylation site" description="N-linked (GlcNAc...) asparagine" evidence="2">
    <location>
        <position position="48"/>
    </location>
</feature>
<feature type="glycosylation site" description="N-linked (GlcNAc...) asparagine" evidence="2">
    <location>
        <position position="99"/>
    </location>
</feature>
<feature type="glycosylation site" description="N-linked (GlcNAc...) asparagine" evidence="2">
    <location>
        <position position="222"/>
    </location>
</feature>
<feature type="glycosylation site" description="N-linked (GlcNAc...) asparagine" evidence="2">
    <location>
        <position position="250"/>
    </location>
</feature>
<feature type="glycosylation site" description="N-linked (GlcNAc...) asparagine" evidence="2">
    <location>
        <position position="269"/>
    </location>
</feature>
<feature type="glycosylation site" description="N-linked (GlcNAc...) asparagine" evidence="2">
    <location>
        <position position="279"/>
    </location>
</feature>
<feature type="glycosylation site" description="N-linked (GlcNAc...) asparagine" evidence="2">
    <location>
        <position position="288"/>
    </location>
</feature>
<reference key="1">
    <citation type="journal article" date="2002" name="Nature">
        <title>Sequence and analysis of chromosome 2 of Dictyostelium discoideum.</title>
        <authorList>
            <person name="Gloeckner G."/>
            <person name="Eichinger L."/>
            <person name="Szafranski K."/>
            <person name="Pachebat J.A."/>
            <person name="Bankier A.T."/>
            <person name="Dear P.H."/>
            <person name="Lehmann R."/>
            <person name="Baumgart C."/>
            <person name="Parra G."/>
            <person name="Abril J.F."/>
            <person name="Guigo R."/>
            <person name="Kumpf K."/>
            <person name="Tunggal B."/>
            <person name="Cox E.C."/>
            <person name="Quail M.A."/>
            <person name="Platzer M."/>
            <person name="Rosenthal A."/>
            <person name="Noegel A.A."/>
        </authorList>
    </citation>
    <scope>NUCLEOTIDE SEQUENCE [LARGE SCALE GENOMIC DNA]</scope>
    <source>
        <strain>AX4</strain>
    </source>
</reference>
<reference key="2">
    <citation type="journal article" date="2005" name="Nature">
        <title>The genome of the social amoeba Dictyostelium discoideum.</title>
        <authorList>
            <person name="Eichinger L."/>
            <person name="Pachebat J.A."/>
            <person name="Gloeckner G."/>
            <person name="Rajandream M.A."/>
            <person name="Sucgang R."/>
            <person name="Berriman M."/>
            <person name="Song J."/>
            <person name="Olsen R."/>
            <person name="Szafranski K."/>
            <person name="Xu Q."/>
            <person name="Tunggal B."/>
            <person name="Kummerfeld S."/>
            <person name="Madera M."/>
            <person name="Konfortov B.A."/>
            <person name="Rivero F."/>
            <person name="Bankier A.T."/>
            <person name="Lehmann R."/>
            <person name="Hamlin N."/>
            <person name="Davies R."/>
            <person name="Gaudet P."/>
            <person name="Fey P."/>
            <person name="Pilcher K."/>
            <person name="Chen G."/>
            <person name="Saunders D."/>
            <person name="Sodergren E.J."/>
            <person name="Davis P."/>
            <person name="Kerhornou A."/>
            <person name="Nie X."/>
            <person name="Hall N."/>
            <person name="Anjard C."/>
            <person name="Hemphill L."/>
            <person name="Bason N."/>
            <person name="Farbrother P."/>
            <person name="Desany B."/>
            <person name="Just E."/>
            <person name="Morio T."/>
            <person name="Rost R."/>
            <person name="Churcher C.M."/>
            <person name="Cooper J."/>
            <person name="Haydock S."/>
            <person name="van Driessche N."/>
            <person name="Cronin A."/>
            <person name="Goodhead I."/>
            <person name="Muzny D.M."/>
            <person name="Mourier T."/>
            <person name="Pain A."/>
            <person name="Lu M."/>
            <person name="Harper D."/>
            <person name="Lindsay R."/>
            <person name="Hauser H."/>
            <person name="James K.D."/>
            <person name="Quiles M."/>
            <person name="Madan Babu M."/>
            <person name="Saito T."/>
            <person name="Buchrieser C."/>
            <person name="Wardroper A."/>
            <person name="Felder M."/>
            <person name="Thangavelu M."/>
            <person name="Johnson D."/>
            <person name="Knights A."/>
            <person name="Loulseged H."/>
            <person name="Mungall K.L."/>
            <person name="Oliver K."/>
            <person name="Price C."/>
            <person name="Quail M.A."/>
            <person name="Urushihara H."/>
            <person name="Hernandez J."/>
            <person name="Rabbinowitsch E."/>
            <person name="Steffen D."/>
            <person name="Sanders M."/>
            <person name="Ma J."/>
            <person name="Kohara Y."/>
            <person name="Sharp S."/>
            <person name="Simmonds M.N."/>
            <person name="Spiegler S."/>
            <person name="Tivey A."/>
            <person name="Sugano S."/>
            <person name="White B."/>
            <person name="Walker D."/>
            <person name="Woodward J.R."/>
            <person name="Winckler T."/>
            <person name="Tanaka Y."/>
            <person name="Shaulsky G."/>
            <person name="Schleicher M."/>
            <person name="Weinstock G.M."/>
            <person name="Rosenthal A."/>
            <person name="Cox E.C."/>
            <person name="Chisholm R.L."/>
            <person name="Gibbs R.A."/>
            <person name="Loomis W.F."/>
            <person name="Platzer M."/>
            <person name="Kay R.R."/>
            <person name="Williams J.G."/>
            <person name="Dear P.H."/>
            <person name="Noegel A.A."/>
            <person name="Barrell B.G."/>
            <person name="Kuspa A."/>
        </authorList>
    </citation>
    <scope>NUCLEOTIDE SEQUENCE [LARGE SCALE GENOMIC DNA]</scope>
    <source>
        <strain>AX4</strain>
    </source>
</reference>
<evidence type="ECO:0000250" key="1"/>
<evidence type="ECO:0000255" key="2"/>
<evidence type="ECO:0000255" key="3">
    <source>
        <dbReference type="PROSITE-ProRule" id="PRU01258"/>
    </source>
</evidence>
<evidence type="ECO:0000305" key="4"/>
<sequence length="373" mass="42433">MKIFIIISLILTILIIQSKSKECPCSNVELCKPLEIGPRKEFIGFSVNSTFYPYYNWDHLTTIGIFYSEDIEDELLCMAKTNGVRLVYSAFYPVEQLSNETYIDQWINEKLELVQNTFTDGLNFDVEYPITDPIVAQQYTQLVAATNNAFKSVNLYYQISVDVAWDASNCIDYRCYDYLGLSKASDFLVVMDYDMKLDGYYFKTCLASANSPPSSVLSGMVNFTKLGIDESSLVMGLPWYGYNYPCIGSNYTLQTFECIIPPSSYLGYNCTDASGIEINYSIIMNMLNDTAIQNGGVQWDSESESPYFNFIDLFSGTQHQMWFDNPDSLTIKVNIARTMNLRGVGVWNIDQLWDDHSLSSGMWGALNSFFKIN</sequence>
<organism>
    <name type="scientific">Dictyostelium discoideum</name>
    <name type="common">Social amoeba</name>
    <dbReference type="NCBI Taxonomy" id="44689"/>
    <lineage>
        <taxon>Eukaryota</taxon>
        <taxon>Amoebozoa</taxon>
        <taxon>Evosea</taxon>
        <taxon>Eumycetozoa</taxon>
        <taxon>Dictyostelia</taxon>
        <taxon>Dictyosteliales</taxon>
        <taxon>Dictyosteliaceae</taxon>
        <taxon>Dictyostelium</taxon>
    </lineage>
</organism>
<dbReference type="EC" id="3.2.1.-"/>
<dbReference type="EMBL" id="AAFI02000019">
    <property type="protein sequence ID" value="EAL68899.1"/>
    <property type="molecule type" value="Genomic_DNA"/>
</dbReference>
<dbReference type="SMR" id="Q7KWW8"/>
<dbReference type="FunCoup" id="Q7KWW8">
    <property type="interactions" value="1"/>
</dbReference>
<dbReference type="STRING" id="44689.Q7KWW8"/>
<dbReference type="GlyCosmos" id="Q7KWW8">
    <property type="glycosylation" value="7 sites, No reported glycans"/>
</dbReference>
<dbReference type="GlyGen" id="Q7KWW8">
    <property type="glycosylation" value="7 sites"/>
</dbReference>
<dbReference type="PaxDb" id="44689-DDB0238380"/>
<dbReference type="EnsemblProtists" id="EAL68899">
    <property type="protein sequence ID" value="EAL68899"/>
    <property type="gene ID" value="DDB_G0276795"/>
</dbReference>
<dbReference type="KEGG" id="ddi:DDB_G0276795"/>
<dbReference type="dictyBase" id="DDB_G0276795">
    <property type="gene designation" value="ctbsB"/>
</dbReference>
<dbReference type="VEuPathDB" id="AmoebaDB:DDB_G0276795"/>
<dbReference type="eggNOG" id="KOG2806">
    <property type="taxonomic scope" value="Eukaryota"/>
</dbReference>
<dbReference type="HOGENOM" id="CLU_061189_1_0_1"/>
<dbReference type="InParanoid" id="Q7KWW8"/>
<dbReference type="OMA" id="ARTAWIN"/>
<dbReference type="PhylomeDB" id="Q7KWW8"/>
<dbReference type="PRO" id="PR:Q7KWW8"/>
<dbReference type="Proteomes" id="UP000002195">
    <property type="component" value="Chromosome 2"/>
</dbReference>
<dbReference type="GO" id="GO:0005764">
    <property type="term" value="C:lysosome"/>
    <property type="evidence" value="ECO:0007669"/>
    <property type="project" value="UniProtKB-SubCell"/>
</dbReference>
<dbReference type="GO" id="GO:0008061">
    <property type="term" value="F:chitin binding"/>
    <property type="evidence" value="ECO:0007669"/>
    <property type="project" value="InterPro"/>
</dbReference>
<dbReference type="GO" id="GO:0016798">
    <property type="term" value="F:hydrolase activity, acting on glycosyl bonds"/>
    <property type="evidence" value="ECO:0007669"/>
    <property type="project" value="UniProtKB-KW"/>
</dbReference>
<dbReference type="GO" id="GO:0009313">
    <property type="term" value="P:oligosaccharide catabolic process"/>
    <property type="evidence" value="ECO:0000318"/>
    <property type="project" value="GO_Central"/>
</dbReference>
<dbReference type="CDD" id="cd02875">
    <property type="entry name" value="GH18_chitobiase"/>
    <property type="match status" value="1"/>
</dbReference>
<dbReference type="FunFam" id="3.20.20.80:FF:000250">
    <property type="entry name" value="Probable di-N-acetylchitobiase 1"/>
    <property type="match status" value="1"/>
</dbReference>
<dbReference type="Gene3D" id="3.10.50.10">
    <property type="match status" value="1"/>
</dbReference>
<dbReference type="Gene3D" id="3.20.20.80">
    <property type="entry name" value="Glycosidases"/>
    <property type="match status" value="1"/>
</dbReference>
<dbReference type="InterPro" id="IPR011583">
    <property type="entry name" value="Chitinase_II/V-like_cat"/>
</dbReference>
<dbReference type="InterPro" id="IPR029070">
    <property type="entry name" value="Chitinase_insertion_sf"/>
</dbReference>
<dbReference type="InterPro" id="IPR047898">
    <property type="entry name" value="DIAC_cat"/>
</dbReference>
<dbReference type="InterPro" id="IPR051887">
    <property type="entry name" value="GH18_Domain-Containing"/>
</dbReference>
<dbReference type="InterPro" id="IPR001223">
    <property type="entry name" value="Glyco_hydro18_cat"/>
</dbReference>
<dbReference type="InterPro" id="IPR017853">
    <property type="entry name" value="Glycoside_hydrolase_SF"/>
</dbReference>
<dbReference type="PANTHER" id="PTHR46290">
    <property type="entry name" value="DI-N-ACETYLCHITOBIASE"/>
    <property type="match status" value="1"/>
</dbReference>
<dbReference type="PANTHER" id="PTHR46290:SF1">
    <property type="entry name" value="DI-N-ACETYLCHITOBIASE"/>
    <property type="match status" value="1"/>
</dbReference>
<dbReference type="Pfam" id="PF00704">
    <property type="entry name" value="Glyco_hydro_18"/>
    <property type="match status" value="1"/>
</dbReference>
<dbReference type="SMART" id="SM00636">
    <property type="entry name" value="Glyco_18"/>
    <property type="match status" value="1"/>
</dbReference>
<dbReference type="SUPFAM" id="SSF51445">
    <property type="entry name" value="(Trans)glycosidases"/>
    <property type="match status" value="1"/>
</dbReference>
<dbReference type="PROSITE" id="PS51910">
    <property type="entry name" value="GH18_2"/>
    <property type="match status" value="1"/>
</dbReference>
<name>DIAC1_DICDI</name>
<protein>
    <recommendedName>
        <fullName>Probable di-N-acetylchitobiase 1</fullName>
        <ecNumber>3.2.1.-</ecNumber>
    </recommendedName>
</protein>